<organism>
    <name type="scientific">Cercospora beticola</name>
    <name type="common">Sugarbeet leaf spot fungus</name>
    <dbReference type="NCBI Taxonomy" id="122368"/>
    <lineage>
        <taxon>Eukaryota</taxon>
        <taxon>Fungi</taxon>
        <taxon>Dikarya</taxon>
        <taxon>Ascomycota</taxon>
        <taxon>Pezizomycotina</taxon>
        <taxon>Dothideomycetes</taxon>
        <taxon>Dothideomycetidae</taxon>
        <taxon>Mycosphaerellales</taxon>
        <taxon>Mycosphaerellaceae</taxon>
        <taxon>Cercospora</taxon>
    </lineage>
</organism>
<keyword id="KW-0325">Glycoprotein</keyword>
<keyword id="KW-0472">Membrane</keyword>
<keyword id="KW-0677">Repeat</keyword>
<keyword id="KW-0732">Signal</keyword>
<keyword id="KW-0812">Transmembrane</keyword>
<keyword id="KW-1133">Transmembrane helix</keyword>
<proteinExistence type="inferred from homology"/>
<protein>
    <recommendedName>
        <fullName evidence="7">Fasciclin-like arabinogalactan protein CTB11</fullName>
    </recommendedName>
    <alternativeName>
        <fullName evidence="7">Cercosporin toxin biosynthesis cluster protein 11</fullName>
    </alternativeName>
</protein>
<gene>
    <name evidence="7" type="primary">CTB11</name>
    <name type="ORF">CB0940_00844</name>
</gene>
<reference key="1">
    <citation type="journal article" date="2018" name="Proc. Natl. Acad. Sci. U.S.A.">
        <title>Gene cluster conservation provides insight into cercosporin biosynthesis and extends production to the genus Colletotrichum.</title>
        <authorList>
            <person name="de Jonge R."/>
            <person name="Ebert M.K."/>
            <person name="Huitt-Roehl C.R."/>
            <person name="Pal P."/>
            <person name="Suttle J.C."/>
            <person name="Spanner R.E."/>
            <person name="Neubauer J.D."/>
            <person name="Jurick W.M. II"/>
            <person name="Stott K.A."/>
            <person name="Secor G.A."/>
            <person name="Thomma B.P.H.J."/>
            <person name="Van de Peer Y."/>
            <person name="Townsend C.A."/>
            <person name="Bolton M.D."/>
        </authorList>
    </citation>
    <scope>NUCLEOTIDE SEQUENCE [LARGE SCALE GENOMIC DNA]</scope>
    <scope>FUNCTION</scope>
    <scope>DISRUPTION PHENOTYPE</scope>
    <scope>PATHWAY</scope>
    <source>
        <strain>09-40</strain>
    </source>
</reference>
<reference key="2">
    <citation type="journal article" date="2000" name="Annu. Rev. Phytopathol.">
        <title>The photoactivated cercospora toxin cercosporin: contributions to plant disease and fundamental biology.</title>
        <authorList>
            <person name="Daub M.E."/>
            <person name="Ehrenshaft M."/>
        </authorList>
    </citation>
    <scope>REVIEW ON CERCOSPORIN</scope>
</reference>
<name>CTB11_CERBT</name>
<sequence length="374" mass="40552">MHFPALAVAGCLLSRATAQSLDQVLAKRDSFSLLRDLLHQHGLVDELEFTANATFFAMTNQALRSLADFGINLTTADPNIARAIFKYAQLDAIYTTDTVKALHHEAKVVQTALQPHLFNNLTRGQAAKLRSNRTGGANGILVESGLGVLTPVVEADIPYDHGVIHAIDANMVLPHNISETARLGGMTEFLNLLERSDSVARLESLSDVTIFIPQDEALAKLQPILDMLTSEQLKSVVAQHAVPNRVLYQSLFDGVETLETLDGSTLRIRRGKRGEIFVNGAEVVRTDLLLYGGVAHLIDGALLPEKDASCSTGLFAAAAGGSSRVWKILASHQLTLLAVLAMALVSILYKAYQSRKQSHQLIRPSDGLGNYEKV</sequence>
<accession>A0A2G5I8H1</accession>
<dbReference type="EMBL" id="LKMD01000100">
    <property type="protein sequence ID" value="PIB01156.1"/>
    <property type="molecule type" value="Genomic_DNA"/>
</dbReference>
<dbReference type="RefSeq" id="XP_023458817.1">
    <property type="nucleotide sequence ID" value="XM_023593486.1"/>
</dbReference>
<dbReference type="SMR" id="A0A2G5I8H1"/>
<dbReference type="GlyCosmos" id="A0A2G5I8H1">
    <property type="glycosylation" value="5 sites, No reported glycans"/>
</dbReference>
<dbReference type="GeneID" id="35424656"/>
<dbReference type="OrthoDB" id="286301at2759"/>
<dbReference type="Proteomes" id="UP000230605">
    <property type="component" value="Chromosome 1"/>
</dbReference>
<dbReference type="GO" id="GO:0000329">
    <property type="term" value="C:fungal-type vacuole membrane"/>
    <property type="evidence" value="ECO:0007669"/>
    <property type="project" value="TreeGrafter"/>
</dbReference>
<dbReference type="GO" id="GO:0016236">
    <property type="term" value="P:macroautophagy"/>
    <property type="evidence" value="ECO:0007669"/>
    <property type="project" value="TreeGrafter"/>
</dbReference>
<dbReference type="Gene3D" id="2.30.180.10">
    <property type="entry name" value="FAS1 domain"/>
    <property type="match status" value="2"/>
</dbReference>
<dbReference type="InterPro" id="IPR050904">
    <property type="entry name" value="Adhesion/Biosynth-related"/>
</dbReference>
<dbReference type="InterPro" id="IPR036378">
    <property type="entry name" value="FAS1_dom_sf"/>
</dbReference>
<dbReference type="InterPro" id="IPR000782">
    <property type="entry name" value="FAS1_domain"/>
</dbReference>
<dbReference type="PANTHER" id="PTHR10900:SF77">
    <property type="entry name" value="FI19380P1"/>
    <property type="match status" value="1"/>
</dbReference>
<dbReference type="PANTHER" id="PTHR10900">
    <property type="entry name" value="PERIOSTIN-RELATED"/>
    <property type="match status" value="1"/>
</dbReference>
<dbReference type="Pfam" id="PF02469">
    <property type="entry name" value="Fasciclin"/>
    <property type="match status" value="2"/>
</dbReference>
<dbReference type="SMART" id="SM00554">
    <property type="entry name" value="FAS1"/>
    <property type="match status" value="2"/>
</dbReference>
<dbReference type="SUPFAM" id="SSF82153">
    <property type="entry name" value="FAS1 domain"/>
    <property type="match status" value="2"/>
</dbReference>
<dbReference type="PROSITE" id="PS50213">
    <property type="entry name" value="FAS1"/>
    <property type="match status" value="2"/>
</dbReference>
<evidence type="ECO:0000250" key="1">
    <source>
        <dbReference type="UniProtKB" id="Q0UHZ9"/>
    </source>
</evidence>
<evidence type="ECO:0000255" key="2"/>
<evidence type="ECO:0000255" key="3">
    <source>
        <dbReference type="PROSITE-ProRule" id="PRU00082"/>
    </source>
</evidence>
<evidence type="ECO:0000255" key="4">
    <source>
        <dbReference type="PROSITE-ProRule" id="PRU00498"/>
    </source>
</evidence>
<evidence type="ECO:0000269" key="5">
    <source>
    </source>
</evidence>
<evidence type="ECO:0000303" key="6">
    <source>
    </source>
</evidence>
<evidence type="ECO:0000303" key="7">
    <source>
    </source>
</evidence>
<evidence type="ECO:0000305" key="8"/>
<evidence type="ECO:0000305" key="9">
    <source>
    </source>
</evidence>
<feature type="signal peptide" evidence="2">
    <location>
        <begin position="1"/>
        <end position="18"/>
    </location>
</feature>
<feature type="chain" id="PRO_5013579449" description="Fasciclin-like arabinogalactan protein CTB11">
    <location>
        <begin position="19"/>
        <end position="374"/>
    </location>
</feature>
<feature type="transmembrane region" description="Helical" evidence="2">
    <location>
        <begin position="328"/>
        <end position="348"/>
    </location>
</feature>
<feature type="domain" description="FAS1 1" evidence="3">
    <location>
        <begin position="19"/>
        <end position="171"/>
    </location>
</feature>
<feature type="domain" description="FAS1 2" evidence="3">
    <location>
        <begin position="173"/>
        <end position="302"/>
    </location>
</feature>
<feature type="glycosylation site" description="N-linked (GlcNAc...) asparagine" evidence="4">
    <location>
        <position position="52"/>
    </location>
</feature>
<feature type="glycosylation site" description="N-linked (GlcNAc...) asparagine" evidence="4">
    <location>
        <position position="72"/>
    </location>
</feature>
<feature type="glycosylation site" description="N-linked (GlcNAc...) asparagine" evidence="4">
    <location>
        <position position="120"/>
    </location>
</feature>
<feature type="glycosylation site" description="N-linked (GlcNAc...) asparagine" evidence="4">
    <location>
        <position position="132"/>
    </location>
</feature>
<feature type="glycosylation site" description="N-linked (GlcNAc...) asparagine" evidence="4">
    <location>
        <position position="176"/>
    </location>
</feature>
<comment type="function">
    <text evidence="1 5 6 9">Fasciclin-like arabinogalactan protein; part of the gene cluster that mediates the biosynthesis of cercosporin, a light-activated, non-host-selective toxin (PubMed:29844193). The perylenequinone chromophore of cercosporin absorbs light energy to attain an electronically-activated triplet state and produces active oxygen species such as the hydroxyl radical, superoxide, hydrogen peroxide or singlet oxygen upon reaction with oxygen molecules (PubMed:11701851). These reactive oxygen species cause damage to various cellular components including lipids, proteins and nucleic acids (PubMed:11701851). The first step of cercosporin biosynthesis is performed by the polyketide synthase CTB1 which catalyzes the formation of nor-toralactone (Probable). The starter unit acyltransferase (SAT) domain of CTB1 initiates polyketide extension by the selective utilization of acetyl-CoA, which is elongated to the heptaketide in the beta-ketoacyl synthase (KS) domain by successive condensations with six malonyl units introduced by the malonyl acyltransferase (MAT) domain. The product template (PT) domain catalyzes C4-C9 and C2-C11 aldol cyclizations and dehydrations to a trihydroxynaphthalene, which is thought to be delivered to the thioesterase (TE) domain for product release (Probable). The bifunctional enzyme CTB3 then methylates nor-toralactone to toralactone before conducting an unusual oxidative aromatic ring opening (Probable). The O-methyltransferase CTB2 further methylates the nascent OH-6 of the CBT3 product, blocking further oxidation at this site before the reductase CTB6 reduces the 2-oxopropyl ketone at position C7, giving naphthalene (Probable). The FAD-dependent monooxygenase CTB5 in concert with the multicopper oxidase CTB12 are responsible for homodimerization of naphthalene with CTB7 installing the dioxepine moiety, finally producing cercosporin (Probable). The fasciclin domain-containing protein CTB11 might act with CTB5 and CTB12 whereas the roles of CTB9 and CTB10 have still to be elucidated (By similarity).</text>
</comment>
<comment type="pathway">
    <text evidence="5">Mycotoxin biosynthesis.</text>
</comment>
<comment type="subcellular location">
    <subcellularLocation>
        <location evidence="2">Membrane</location>
        <topology evidence="2">Single-pass membrane protein</topology>
    </subcellularLocation>
</comment>
<comment type="disruption phenotype">
    <text evidence="5">Abolishes the production of cercosporin.</text>
</comment>
<comment type="similarity">
    <text evidence="8">Belongs to the fasciclin-like AGP family.</text>
</comment>